<gene>
    <name evidence="1" type="primary">dapA</name>
    <name type="ordered locus">Fphi_0879</name>
</gene>
<evidence type="ECO:0000255" key="1">
    <source>
        <dbReference type="HAMAP-Rule" id="MF_00418"/>
    </source>
</evidence>
<evidence type="ECO:0000305" key="2"/>
<name>DAPA_FRAP2</name>
<sequence>MSIDINNRLYTALVTPMFVDGSIDWGSFENLLRIQEYQGCGILILGSTGEALALDFDEQCEVVRFVTNLNLNVPIMVGVGGFQLTKQLQWIEFCQTQRVDCFLVVTPLYAKPGSASQTSWFKTVLDKAERPCMLYNVPSRTGVNLAEEVLTSLKDHPNLWALKEASGDIQRCARYQELAPNLVIYSGEDGLLPELADVGVKGLVSVISNIWPEQTKEYVKQSLAHQIAITDKVIWEVATRSCFSVTNPIPVKAWLAYSGVITTNTLRAPLLANELEDLSLLIGADSLVKDWFSHI</sequence>
<accession>B0TWJ4</accession>
<feature type="chain" id="PRO_0000340953" description="4-hydroxy-tetrahydrodipicolinate synthase">
    <location>
        <begin position="1"/>
        <end position="295"/>
    </location>
</feature>
<feature type="active site" description="Proton donor/acceptor" evidence="1">
    <location>
        <position position="135"/>
    </location>
</feature>
<feature type="active site" description="Schiff-base intermediate with substrate" evidence="1">
    <location>
        <position position="163"/>
    </location>
</feature>
<feature type="binding site" evidence="1">
    <location>
        <position position="48"/>
    </location>
    <ligand>
        <name>pyruvate</name>
        <dbReference type="ChEBI" id="CHEBI:15361"/>
    </ligand>
</feature>
<feature type="binding site" evidence="1">
    <location>
        <position position="204"/>
    </location>
    <ligand>
        <name>pyruvate</name>
        <dbReference type="ChEBI" id="CHEBI:15361"/>
    </ligand>
</feature>
<feature type="site" description="Part of a proton relay during catalysis" evidence="1">
    <location>
        <position position="47"/>
    </location>
</feature>
<feature type="site" description="Part of a proton relay during catalysis" evidence="1">
    <location>
        <position position="109"/>
    </location>
</feature>
<protein>
    <recommendedName>
        <fullName evidence="1">4-hydroxy-tetrahydrodipicolinate synthase</fullName>
        <shortName evidence="1">HTPA synthase</shortName>
        <ecNumber evidence="1">4.3.3.7</ecNumber>
    </recommendedName>
</protein>
<reference key="1">
    <citation type="submission" date="2007-12" db="EMBL/GenBank/DDBJ databases">
        <title>Complete sequence of chromosome of Francisella philomiragia subsp. philomiragia ATCC 25017.</title>
        <authorList>
            <consortium name="US DOE Joint Genome Institute"/>
            <person name="Copeland A."/>
            <person name="Lucas S."/>
            <person name="Lapidus A."/>
            <person name="Barry K."/>
            <person name="Detter J.C."/>
            <person name="Glavina del Rio T."/>
            <person name="Hammon N."/>
            <person name="Israni S."/>
            <person name="Dalin E."/>
            <person name="Tice H."/>
            <person name="Pitluck S."/>
            <person name="Chain P."/>
            <person name="Malfatti S."/>
            <person name="Shin M."/>
            <person name="Vergez L."/>
            <person name="Schmutz J."/>
            <person name="Larimer F."/>
            <person name="Land M."/>
            <person name="Hauser L."/>
            <person name="Richardson P."/>
        </authorList>
    </citation>
    <scope>NUCLEOTIDE SEQUENCE [LARGE SCALE GENOMIC DNA]</scope>
    <source>
        <strain>ATCC 25017 / CCUG 19701 / FSC 153 / O#319-036</strain>
    </source>
</reference>
<organism>
    <name type="scientific">Francisella philomiragia subsp. philomiragia (strain ATCC 25017 / CCUG 19701 / FSC 153 / O#319-036)</name>
    <dbReference type="NCBI Taxonomy" id="484022"/>
    <lineage>
        <taxon>Bacteria</taxon>
        <taxon>Pseudomonadati</taxon>
        <taxon>Pseudomonadota</taxon>
        <taxon>Gammaproteobacteria</taxon>
        <taxon>Thiotrichales</taxon>
        <taxon>Francisellaceae</taxon>
        <taxon>Francisella</taxon>
    </lineage>
</organism>
<comment type="function">
    <text evidence="1">Catalyzes the condensation of (S)-aspartate-beta-semialdehyde [(S)-ASA] and pyruvate to 4-hydroxy-tetrahydrodipicolinate (HTPA).</text>
</comment>
<comment type="catalytic activity">
    <reaction evidence="1">
        <text>L-aspartate 4-semialdehyde + pyruvate = (2S,4S)-4-hydroxy-2,3,4,5-tetrahydrodipicolinate + H2O + H(+)</text>
        <dbReference type="Rhea" id="RHEA:34171"/>
        <dbReference type="ChEBI" id="CHEBI:15361"/>
        <dbReference type="ChEBI" id="CHEBI:15377"/>
        <dbReference type="ChEBI" id="CHEBI:15378"/>
        <dbReference type="ChEBI" id="CHEBI:67139"/>
        <dbReference type="ChEBI" id="CHEBI:537519"/>
        <dbReference type="EC" id="4.3.3.7"/>
    </reaction>
</comment>
<comment type="pathway">
    <text evidence="1">Amino-acid biosynthesis; L-lysine biosynthesis via DAP pathway; (S)-tetrahydrodipicolinate from L-aspartate: step 3/4.</text>
</comment>
<comment type="subunit">
    <text evidence="1">Homotetramer; dimer of dimers.</text>
</comment>
<comment type="subcellular location">
    <subcellularLocation>
        <location evidence="1">Cytoplasm</location>
    </subcellularLocation>
</comment>
<comment type="similarity">
    <text evidence="1">Belongs to the DapA family.</text>
</comment>
<comment type="caution">
    <text evidence="2">Was originally thought to be a dihydrodipicolinate synthase (DHDPS), catalyzing the condensation of (S)-aspartate-beta-semialdehyde [(S)-ASA] and pyruvate to dihydrodipicolinate (DHDP). However, it was shown in E.coli that the product of the enzymatic reaction is not dihydrodipicolinate but in fact (4S)-4-hydroxy-2,3,4,5-tetrahydro-(2S)-dipicolinic acid (HTPA), and that the consecutive dehydration reaction leading to DHDP is not spontaneous but catalyzed by DapB.</text>
</comment>
<dbReference type="EC" id="4.3.3.7" evidence="1"/>
<dbReference type="EMBL" id="CP000937">
    <property type="protein sequence ID" value="ABZ87102.1"/>
    <property type="molecule type" value="Genomic_DNA"/>
</dbReference>
<dbReference type="SMR" id="B0TWJ4"/>
<dbReference type="KEGG" id="fph:Fphi_0879"/>
<dbReference type="eggNOG" id="COG0329">
    <property type="taxonomic scope" value="Bacteria"/>
</dbReference>
<dbReference type="HOGENOM" id="CLU_049343_7_0_6"/>
<dbReference type="UniPathway" id="UPA00034">
    <property type="reaction ID" value="UER00017"/>
</dbReference>
<dbReference type="GO" id="GO:0005829">
    <property type="term" value="C:cytosol"/>
    <property type="evidence" value="ECO:0007669"/>
    <property type="project" value="TreeGrafter"/>
</dbReference>
<dbReference type="GO" id="GO:0008840">
    <property type="term" value="F:4-hydroxy-tetrahydrodipicolinate synthase activity"/>
    <property type="evidence" value="ECO:0007669"/>
    <property type="project" value="UniProtKB-UniRule"/>
</dbReference>
<dbReference type="GO" id="GO:0019877">
    <property type="term" value="P:diaminopimelate biosynthetic process"/>
    <property type="evidence" value="ECO:0007669"/>
    <property type="project" value="UniProtKB-UniRule"/>
</dbReference>
<dbReference type="GO" id="GO:0009089">
    <property type="term" value="P:lysine biosynthetic process via diaminopimelate"/>
    <property type="evidence" value="ECO:0007669"/>
    <property type="project" value="UniProtKB-UniRule"/>
</dbReference>
<dbReference type="Gene3D" id="3.20.20.70">
    <property type="entry name" value="Aldolase class I"/>
    <property type="match status" value="1"/>
</dbReference>
<dbReference type="HAMAP" id="MF_00418">
    <property type="entry name" value="DapA"/>
    <property type="match status" value="1"/>
</dbReference>
<dbReference type="InterPro" id="IPR013785">
    <property type="entry name" value="Aldolase_TIM"/>
</dbReference>
<dbReference type="InterPro" id="IPR005263">
    <property type="entry name" value="DapA"/>
</dbReference>
<dbReference type="InterPro" id="IPR002220">
    <property type="entry name" value="DapA-like"/>
</dbReference>
<dbReference type="InterPro" id="IPR020625">
    <property type="entry name" value="Schiff_base-form_aldolases_AS"/>
</dbReference>
<dbReference type="InterPro" id="IPR020624">
    <property type="entry name" value="Schiff_base-form_aldolases_CS"/>
</dbReference>
<dbReference type="NCBIfam" id="TIGR00674">
    <property type="entry name" value="dapA"/>
    <property type="match status" value="1"/>
</dbReference>
<dbReference type="PANTHER" id="PTHR12128:SF66">
    <property type="entry name" value="4-HYDROXY-2-OXOGLUTARATE ALDOLASE, MITOCHONDRIAL"/>
    <property type="match status" value="1"/>
</dbReference>
<dbReference type="PANTHER" id="PTHR12128">
    <property type="entry name" value="DIHYDRODIPICOLINATE SYNTHASE"/>
    <property type="match status" value="1"/>
</dbReference>
<dbReference type="Pfam" id="PF00701">
    <property type="entry name" value="DHDPS"/>
    <property type="match status" value="1"/>
</dbReference>
<dbReference type="PIRSF" id="PIRSF001365">
    <property type="entry name" value="DHDPS"/>
    <property type="match status" value="1"/>
</dbReference>
<dbReference type="PRINTS" id="PR00146">
    <property type="entry name" value="DHPICSNTHASE"/>
</dbReference>
<dbReference type="SMART" id="SM01130">
    <property type="entry name" value="DHDPS"/>
    <property type="match status" value="1"/>
</dbReference>
<dbReference type="SUPFAM" id="SSF51569">
    <property type="entry name" value="Aldolase"/>
    <property type="match status" value="1"/>
</dbReference>
<dbReference type="PROSITE" id="PS00665">
    <property type="entry name" value="DHDPS_1"/>
    <property type="match status" value="1"/>
</dbReference>
<dbReference type="PROSITE" id="PS00666">
    <property type="entry name" value="DHDPS_2"/>
    <property type="match status" value="1"/>
</dbReference>
<proteinExistence type="inferred from homology"/>
<keyword id="KW-0028">Amino-acid biosynthesis</keyword>
<keyword id="KW-0963">Cytoplasm</keyword>
<keyword id="KW-0220">Diaminopimelate biosynthesis</keyword>
<keyword id="KW-0456">Lyase</keyword>
<keyword id="KW-0457">Lysine biosynthesis</keyword>
<keyword id="KW-0704">Schiff base</keyword>